<sequence>MSDDVALPLEFTDAAANKVKSLIADEDNPNLKLRVYITGGGCSGFQYGFTFDDQVNEGDMTIEKQGVGLVVDPMSLQYLVGGSVDYTEGLEGSRFIVTNPNAKSTCGCGSSFSI</sequence>
<protein>
    <recommendedName>
        <fullName evidence="1">Iron-sulfur cluster insertion protein ErpA</fullName>
    </recommendedName>
</protein>
<keyword id="KW-0408">Iron</keyword>
<keyword id="KW-0411">Iron-sulfur</keyword>
<keyword id="KW-0479">Metal-binding</keyword>
<accession>Q1RG32</accession>
<evidence type="ECO:0000255" key="1">
    <source>
        <dbReference type="HAMAP-Rule" id="MF_01380"/>
    </source>
</evidence>
<reference key="1">
    <citation type="journal article" date="2006" name="Proc. Natl. Acad. Sci. U.S.A.">
        <title>Identification of genes subject to positive selection in uropathogenic strains of Escherichia coli: a comparative genomics approach.</title>
        <authorList>
            <person name="Chen S.L."/>
            <person name="Hung C.-S."/>
            <person name="Xu J."/>
            <person name="Reigstad C.S."/>
            <person name="Magrini V."/>
            <person name="Sabo A."/>
            <person name="Blasiar D."/>
            <person name="Bieri T."/>
            <person name="Meyer R.R."/>
            <person name="Ozersky P."/>
            <person name="Armstrong J.R."/>
            <person name="Fulton R.S."/>
            <person name="Latreille J.P."/>
            <person name="Spieth J."/>
            <person name="Hooton T.M."/>
            <person name="Mardis E.R."/>
            <person name="Hultgren S.J."/>
            <person name="Gordon J.I."/>
        </authorList>
    </citation>
    <scope>NUCLEOTIDE SEQUENCE [LARGE SCALE GENOMIC DNA]</scope>
    <source>
        <strain>UTI89 / UPEC</strain>
    </source>
</reference>
<organism>
    <name type="scientific">Escherichia coli (strain UTI89 / UPEC)</name>
    <dbReference type="NCBI Taxonomy" id="364106"/>
    <lineage>
        <taxon>Bacteria</taxon>
        <taxon>Pseudomonadati</taxon>
        <taxon>Pseudomonadota</taxon>
        <taxon>Gammaproteobacteria</taxon>
        <taxon>Enterobacterales</taxon>
        <taxon>Enterobacteriaceae</taxon>
        <taxon>Escherichia</taxon>
    </lineage>
</organism>
<dbReference type="EMBL" id="CP000243">
    <property type="protein sequence ID" value="ABE05682.1"/>
    <property type="molecule type" value="Genomic_DNA"/>
</dbReference>
<dbReference type="RefSeq" id="WP_001295564.1">
    <property type="nucleotide sequence ID" value="NZ_CP064825.1"/>
</dbReference>
<dbReference type="SMR" id="Q1RG32"/>
<dbReference type="GeneID" id="93777270"/>
<dbReference type="KEGG" id="eci:UTI89_C0172"/>
<dbReference type="HOGENOM" id="CLU_069054_5_3_6"/>
<dbReference type="Proteomes" id="UP000001952">
    <property type="component" value="Chromosome"/>
</dbReference>
<dbReference type="GO" id="GO:0005829">
    <property type="term" value="C:cytosol"/>
    <property type="evidence" value="ECO:0007669"/>
    <property type="project" value="TreeGrafter"/>
</dbReference>
<dbReference type="GO" id="GO:0051537">
    <property type="term" value="F:2 iron, 2 sulfur cluster binding"/>
    <property type="evidence" value="ECO:0007669"/>
    <property type="project" value="TreeGrafter"/>
</dbReference>
<dbReference type="GO" id="GO:0051539">
    <property type="term" value="F:4 iron, 4 sulfur cluster binding"/>
    <property type="evidence" value="ECO:0007669"/>
    <property type="project" value="TreeGrafter"/>
</dbReference>
<dbReference type="GO" id="GO:0005506">
    <property type="term" value="F:iron ion binding"/>
    <property type="evidence" value="ECO:0007669"/>
    <property type="project" value="UniProtKB-UniRule"/>
</dbReference>
<dbReference type="GO" id="GO:0016226">
    <property type="term" value="P:iron-sulfur cluster assembly"/>
    <property type="evidence" value="ECO:0007669"/>
    <property type="project" value="UniProtKB-UniRule"/>
</dbReference>
<dbReference type="FunFam" id="2.60.300.12:FF:000002">
    <property type="entry name" value="Iron-sulfur cluster insertion protein ErpA"/>
    <property type="match status" value="1"/>
</dbReference>
<dbReference type="Gene3D" id="2.60.300.12">
    <property type="entry name" value="HesB-like domain"/>
    <property type="match status" value="1"/>
</dbReference>
<dbReference type="HAMAP" id="MF_01380">
    <property type="entry name" value="Fe_S_insert_ErpA"/>
    <property type="match status" value="1"/>
</dbReference>
<dbReference type="InterPro" id="IPR000361">
    <property type="entry name" value="FeS_biogenesis"/>
</dbReference>
<dbReference type="InterPro" id="IPR016092">
    <property type="entry name" value="FeS_cluster_insertion"/>
</dbReference>
<dbReference type="InterPro" id="IPR017870">
    <property type="entry name" value="FeS_cluster_insertion_CS"/>
</dbReference>
<dbReference type="InterPro" id="IPR023063">
    <property type="entry name" value="FeS_cluster_insertion_RrpA"/>
</dbReference>
<dbReference type="InterPro" id="IPR035903">
    <property type="entry name" value="HesB-like_dom_sf"/>
</dbReference>
<dbReference type="NCBIfam" id="TIGR00049">
    <property type="entry name" value="iron-sulfur cluster assembly accessory protein"/>
    <property type="match status" value="1"/>
</dbReference>
<dbReference type="NCBIfam" id="NF010147">
    <property type="entry name" value="PRK13623.1"/>
    <property type="match status" value="1"/>
</dbReference>
<dbReference type="PANTHER" id="PTHR43011">
    <property type="entry name" value="IRON-SULFUR CLUSTER ASSEMBLY 2 HOMOLOG, MITOCHONDRIAL"/>
    <property type="match status" value="1"/>
</dbReference>
<dbReference type="PANTHER" id="PTHR43011:SF1">
    <property type="entry name" value="IRON-SULFUR CLUSTER ASSEMBLY 2 HOMOLOG, MITOCHONDRIAL"/>
    <property type="match status" value="1"/>
</dbReference>
<dbReference type="Pfam" id="PF01521">
    <property type="entry name" value="Fe-S_biosyn"/>
    <property type="match status" value="1"/>
</dbReference>
<dbReference type="SUPFAM" id="SSF89360">
    <property type="entry name" value="HesB-like domain"/>
    <property type="match status" value="1"/>
</dbReference>
<dbReference type="PROSITE" id="PS01152">
    <property type="entry name" value="HESB"/>
    <property type="match status" value="1"/>
</dbReference>
<feature type="chain" id="PRO_0000311478" description="Iron-sulfur cluster insertion protein ErpA">
    <location>
        <begin position="1"/>
        <end position="114"/>
    </location>
</feature>
<feature type="binding site" evidence="1">
    <location>
        <position position="42"/>
    </location>
    <ligand>
        <name>iron-sulfur cluster</name>
        <dbReference type="ChEBI" id="CHEBI:30408"/>
    </ligand>
</feature>
<feature type="binding site" evidence="1">
    <location>
        <position position="106"/>
    </location>
    <ligand>
        <name>iron-sulfur cluster</name>
        <dbReference type="ChEBI" id="CHEBI:30408"/>
    </ligand>
</feature>
<feature type="binding site" evidence="1">
    <location>
        <position position="108"/>
    </location>
    <ligand>
        <name>iron-sulfur cluster</name>
        <dbReference type="ChEBI" id="CHEBI:30408"/>
    </ligand>
</feature>
<proteinExistence type="inferred from homology"/>
<gene>
    <name evidence="1" type="primary">erpA</name>
    <name type="ordered locus">UTI89_C0172</name>
</gene>
<comment type="function">
    <text evidence="1">Required for insertion of 4Fe-4S clusters for at least IspG.</text>
</comment>
<comment type="cofactor">
    <cofactor evidence="1">
        <name>iron-sulfur cluster</name>
        <dbReference type="ChEBI" id="CHEBI:30408"/>
    </cofactor>
    <text evidence="1">Binds 1 iron-sulfur cluster per subunit.</text>
</comment>
<comment type="subunit">
    <text evidence="1">Homodimer.</text>
</comment>
<comment type="similarity">
    <text evidence="1">Belongs to the HesB/IscA family.</text>
</comment>
<name>ERPA_ECOUT</name>